<gene>
    <name evidence="1" type="primary">rpsO</name>
    <name type="ordered locus">lpg2769</name>
</gene>
<protein>
    <recommendedName>
        <fullName evidence="1">Small ribosomal subunit protein uS15</fullName>
    </recommendedName>
    <alternativeName>
        <fullName evidence="2">30S ribosomal protein S15</fullName>
    </alternativeName>
</protein>
<sequence>MSLNSAEKAEIINEYKRGDKDTGSPEVQVSLITSRIKYLTDHFKENKKDFHSRRGLQELVNKRRKLLKYLKRNDQDRYQTLIQNLGLRDSY</sequence>
<proteinExistence type="inferred from homology"/>
<keyword id="KW-1185">Reference proteome</keyword>
<keyword id="KW-0687">Ribonucleoprotein</keyword>
<keyword id="KW-0689">Ribosomal protein</keyword>
<keyword id="KW-0694">RNA-binding</keyword>
<keyword id="KW-0699">rRNA-binding</keyword>
<name>RS15_LEGPH</name>
<comment type="function">
    <text evidence="1">One of the primary rRNA binding proteins, it binds directly to 16S rRNA where it helps nucleate assembly of the platform of the 30S subunit by binding and bridging several RNA helices of the 16S rRNA.</text>
</comment>
<comment type="function">
    <text evidence="1">Forms an intersubunit bridge (bridge B4) with the 23S rRNA of the 50S subunit in the ribosome.</text>
</comment>
<comment type="subunit">
    <text evidence="1">Part of the 30S ribosomal subunit. Forms a bridge to the 50S subunit in the 70S ribosome, contacting the 23S rRNA.</text>
</comment>
<comment type="similarity">
    <text evidence="1">Belongs to the universal ribosomal protein uS15 family.</text>
</comment>
<reference key="1">
    <citation type="journal article" date="2004" name="Science">
        <title>The genomic sequence of the accidental pathogen Legionella pneumophila.</title>
        <authorList>
            <person name="Chien M."/>
            <person name="Morozova I."/>
            <person name="Shi S."/>
            <person name="Sheng H."/>
            <person name="Chen J."/>
            <person name="Gomez S.M."/>
            <person name="Asamani G."/>
            <person name="Hill K."/>
            <person name="Nuara J."/>
            <person name="Feder M."/>
            <person name="Rineer J."/>
            <person name="Greenberg J.J."/>
            <person name="Steshenko V."/>
            <person name="Park S.H."/>
            <person name="Zhao B."/>
            <person name="Teplitskaya E."/>
            <person name="Edwards J.R."/>
            <person name="Pampou S."/>
            <person name="Georghiou A."/>
            <person name="Chou I.-C."/>
            <person name="Iannuccilli W."/>
            <person name="Ulz M.E."/>
            <person name="Kim D.H."/>
            <person name="Geringer-Sameth A."/>
            <person name="Goldsberry C."/>
            <person name="Morozov P."/>
            <person name="Fischer S.G."/>
            <person name="Segal G."/>
            <person name="Qu X."/>
            <person name="Rzhetsky A."/>
            <person name="Zhang P."/>
            <person name="Cayanis E."/>
            <person name="De Jong P.J."/>
            <person name="Ju J."/>
            <person name="Kalachikov S."/>
            <person name="Shuman H.A."/>
            <person name="Russo J.J."/>
        </authorList>
    </citation>
    <scope>NUCLEOTIDE SEQUENCE [LARGE SCALE GENOMIC DNA]</scope>
    <source>
        <strain>Philadelphia 1 / ATCC 33152 / DSM 7513</strain>
    </source>
</reference>
<feature type="chain" id="PRO_0000115460" description="Small ribosomal subunit protein uS15">
    <location>
        <begin position="1"/>
        <end position="91"/>
    </location>
</feature>
<dbReference type="EMBL" id="AE017354">
    <property type="protein sequence ID" value="AAU28820.1"/>
    <property type="molecule type" value="Genomic_DNA"/>
</dbReference>
<dbReference type="RefSeq" id="WP_010948459.1">
    <property type="nucleotide sequence ID" value="NC_002942.5"/>
</dbReference>
<dbReference type="RefSeq" id="YP_096767.1">
    <property type="nucleotide sequence ID" value="NC_002942.5"/>
</dbReference>
<dbReference type="SMR" id="Q5ZRV7"/>
<dbReference type="STRING" id="272624.lpg2769"/>
<dbReference type="PaxDb" id="272624-lpg2769"/>
<dbReference type="GeneID" id="57036767"/>
<dbReference type="KEGG" id="lpn:lpg2769"/>
<dbReference type="PATRIC" id="fig|272624.6.peg.2951"/>
<dbReference type="eggNOG" id="COG0184">
    <property type="taxonomic scope" value="Bacteria"/>
</dbReference>
<dbReference type="HOGENOM" id="CLU_148518_0_0_6"/>
<dbReference type="OrthoDB" id="9799262at2"/>
<dbReference type="Proteomes" id="UP000000609">
    <property type="component" value="Chromosome"/>
</dbReference>
<dbReference type="GO" id="GO:0022627">
    <property type="term" value="C:cytosolic small ribosomal subunit"/>
    <property type="evidence" value="ECO:0007669"/>
    <property type="project" value="TreeGrafter"/>
</dbReference>
<dbReference type="GO" id="GO:0019843">
    <property type="term" value="F:rRNA binding"/>
    <property type="evidence" value="ECO:0007669"/>
    <property type="project" value="UniProtKB-UniRule"/>
</dbReference>
<dbReference type="GO" id="GO:0003735">
    <property type="term" value="F:structural constituent of ribosome"/>
    <property type="evidence" value="ECO:0007669"/>
    <property type="project" value="InterPro"/>
</dbReference>
<dbReference type="GO" id="GO:0006412">
    <property type="term" value="P:translation"/>
    <property type="evidence" value="ECO:0007669"/>
    <property type="project" value="UniProtKB-UniRule"/>
</dbReference>
<dbReference type="CDD" id="cd00353">
    <property type="entry name" value="Ribosomal_S15p_S13e"/>
    <property type="match status" value="1"/>
</dbReference>
<dbReference type="FunFam" id="1.10.287.10:FF:000002">
    <property type="entry name" value="30S ribosomal protein S15"/>
    <property type="match status" value="1"/>
</dbReference>
<dbReference type="Gene3D" id="6.10.250.3130">
    <property type="match status" value="1"/>
</dbReference>
<dbReference type="Gene3D" id="1.10.287.10">
    <property type="entry name" value="S15/NS1, RNA-binding"/>
    <property type="match status" value="1"/>
</dbReference>
<dbReference type="HAMAP" id="MF_01343_B">
    <property type="entry name" value="Ribosomal_uS15_B"/>
    <property type="match status" value="1"/>
</dbReference>
<dbReference type="InterPro" id="IPR000589">
    <property type="entry name" value="Ribosomal_uS15"/>
</dbReference>
<dbReference type="InterPro" id="IPR005290">
    <property type="entry name" value="Ribosomal_uS15_bac-type"/>
</dbReference>
<dbReference type="InterPro" id="IPR009068">
    <property type="entry name" value="uS15_NS1_RNA-bd_sf"/>
</dbReference>
<dbReference type="NCBIfam" id="TIGR00952">
    <property type="entry name" value="S15_bact"/>
    <property type="match status" value="1"/>
</dbReference>
<dbReference type="PANTHER" id="PTHR23321">
    <property type="entry name" value="RIBOSOMAL PROTEIN S15, BACTERIAL AND ORGANELLAR"/>
    <property type="match status" value="1"/>
</dbReference>
<dbReference type="PANTHER" id="PTHR23321:SF26">
    <property type="entry name" value="SMALL RIBOSOMAL SUBUNIT PROTEIN US15M"/>
    <property type="match status" value="1"/>
</dbReference>
<dbReference type="Pfam" id="PF00312">
    <property type="entry name" value="Ribosomal_S15"/>
    <property type="match status" value="1"/>
</dbReference>
<dbReference type="SMART" id="SM01387">
    <property type="entry name" value="Ribosomal_S15"/>
    <property type="match status" value="1"/>
</dbReference>
<dbReference type="SUPFAM" id="SSF47060">
    <property type="entry name" value="S15/NS1 RNA-binding domain"/>
    <property type="match status" value="1"/>
</dbReference>
<dbReference type="PROSITE" id="PS00362">
    <property type="entry name" value="RIBOSOMAL_S15"/>
    <property type="match status" value="1"/>
</dbReference>
<organism>
    <name type="scientific">Legionella pneumophila subsp. pneumophila (strain Philadelphia 1 / ATCC 33152 / DSM 7513)</name>
    <dbReference type="NCBI Taxonomy" id="272624"/>
    <lineage>
        <taxon>Bacteria</taxon>
        <taxon>Pseudomonadati</taxon>
        <taxon>Pseudomonadota</taxon>
        <taxon>Gammaproteobacteria</taxon>
        <taxon>Legionellales</taxon>
        <taxon>Legionellaceae</taxon>
        <taxon>Legionella</taxon>
    </lineage>
</organism>
<evidence type="ECO:0000255" key="1">
    <source>
        <dbReference type="HAMAP-Rule" id="MF_01343"/>
    </source>
</evidence>
<evidence type="ECO:0000305" key="2"/>
<accession>Q5ZRV7</accession>